<accession>Q6H6R9</accession>
<accession>A0A0P0VMH6</accession>
<accession>A3A9L5</accession>
<accession>Q6H6R8</accession>
<name>FTSH7_ORYSJ</name>
<reference key="1">
    <citation type="journal article" date="2005" name="Nature">
        <title>The map-based sequence of the rice genome.</title>
        <authorList>
            <consortium name="International rice genome sequencing project (IRGSP)"/>
        </authorList>
    </citation>
    <scope>NUCLEOTIDE SEQUENCE [LARGE SCALE GENOMIC DNA]</scope>
    <source>
        <strain>cv. Nipponbare</strain>
    </source>
</reference>
<reference key="2">
    <citation type="journal article" date="2008" name="Nucleic Acids Res.">
        <title>The rice annotation project database (RAP-DB): 2008 update.</title>
        <authorList>
            <consortium name="The rice annotation project (RAP)"/>
        </authorList>
    </citation>
    <scope>GENOME REANNOTATION</scope>
    <source>
        <strain>cv. Nipponbare</strain>
    </source>
</reference>
<reference key="3">
    <citation type="journal article" date="2013" name="Rice">
        <title>Improvement of the Oryza sativa Nipponbare reference genome using next generation sequence and optical map data.</title>
        <authorList>
            <person name="Kawahara Y."/>
            <person name="de la Bastide M."/>
            <person name="Hamilton J.P."/>
            <person name="Kanamori H."/>
            <person name="McCombie W.R."/>
            <person name="Ouyang S."/>
            <person name="Schwartz D.C."/>
            <person name="Tanaka T."/>
            <person name="Wu J."/>
            <person name="Zhou S."/>
            <person name="Childs K.L."/>
            <person name="Davidson R.M."/>
            <person name="Lin H."/>
            <person name="Quesada-Ocampo L."/>
            <person name="Vaillancourt B."/>
            <person name="Sakai H."/>
            <person name="Lee S.S."/>
            <person name="Kim J."/>
            <person name="Numa H."/>
            <person name="Itoh T."/>
            <person name="Buell C.R."/>
            <person name="Matsumoto T."/>
        </authorList>
    </citation>
    <scope>GENOME REANNOTATION</scope>
    <source>
        <strain>cv. Nipponbare</strain>
    </source>
</reference>
<reference key="4">
    <citation type="journal article" date="2005" name="PLoS Biol.">
        <title>The genomes of Oryza sativa: a history of duplications.</title>
        <authorList>
            <person name="Yu J."/>
            <person name="Wang J."/>
            <person name="Lin W."/>
            <person name="Li S."/>
            <person name="Li H."/>
            <person name="Zhou J."/>
            <person name="Ni P."/>
            <person name="Dong W."/>
            <person name="Hu S."/>
            <person name="Zeng C."/>
            <person name="Zhang J."/>
            <person name="Zhang Y."/>
            <person name="Li R."/>
            <person name="Xu Z."/>
            <person name="Li S."/>
            <person name="Li X."/>
            <person name="Zheng H."/>
            <person name="Cong L."/>
            <person name="Lin L."/>
            <person name="Yin J."/>
            <person name="Geng J."/>
            <person name="Li G."/>
            <person name="Shi J."/>
            <person name="Liu J."/>
            <person name="Lv H."/>
            <person name="Li J."/>
            <person name="Wang J."/>
            <person name="Deng Y."/>
            <person name="Ran L."/>
            <person name="Shi X."/>
            <person name="Wang X."/>
            <person name="Wu Q."/>
            <person name="Li C."/>
            <person name="Ren X."/>
            <person name="Wang J."/>
            <person name="Wang X."/>
            <person name="Li D."/>
            <person name="Liu D."/>
            <person name="Zhang X."/>
            <person name="Ji Z."/>
            <person name="Zhao W."/>
            <person name="Sun Y."/>
            <person name="Zhang Z."/>
            <person name="Bao J."/>
            <person name="Han Y."/>
            <person name="Dong L."/>
            <person name="Ji J."/>
            <person name="Chen P."/>
            <person name="Wu S."/>
            <person name="Liu J."/>
            <person name="Xiao Y."/>
            <person name="Bu D."/>
            <person name="Tan J."/>
            <person name="Yang L."/>
            <person name="Ye C."/>
            <person name="Zhang J."/>
            <person name="Xu J."/>
            <person name="Zhou Y."/>
            <person name="Yu Y."/>
            <person name="Zhang B."/>
            <person name="Zhuang S."/>
            <person name="Wei H."/>
            <person name="Liu B."/>
            <person name="Lei M."/>
            <person name="Yu H."/>
            <person name="Li Y."/>
            <person name="Xu H."/>
            <person name="Wei S."/>
            <person name="He X."/>
            <person name="Fang L."/>
            <person name="Zhang Z."/>
            <person name="Zhang Y."/>
            <person name="Huang X."/>
            <person name="Su Z."/>
            <person name="Tong W."/>
            <person name="Li J."/>
            <person name="Tong Z."/>
            <person name="Li S."/>
            <person name="Ye J."/>
            <person name="Wang L."/>
            <person name="Fang L."/>
            <person name="Lei T."/>
            <person name="Chen C.-S."/>
            <person name="Chen H.-C."/>
            <person name="Xu Z."/>
            <person name="Li H."/>
            <person name="Huang H."/>
            <person name="Zhang F."/>
            <person name="Xu H."/>
            <person name="Li N."/>
            <person name="Zhao C."/>
            <person name="Li S."/>
            <person name="Dong L."/>
            <person name="Huang Y."/>
            <person name="Li L."/>
            <person name="Xi Y."/>
            <person name="Qi Q."/>
            <person name="Li W."/>
            <person name="Zhang B."/>
            <person name="Hu W."/>
            <person name="Zhang Y."/>
            <person name="Tian X."/>
            <person name="Jiao Y."/>
            <person name="Liang X."/>
            <person name="Jin J."/>
            <person name="Gao L."/>
            <person name="Zheng W."/>
            <person name="Hao B."/>
            <person name="Liu S.-M."/>
            <person name="Wang W."/>
            <person name="Yuan L."/>
            <person name="Cao M."/>
            <person name="McDermott J."/>
            <person name="Samudrala R."/>
            <person name="Wang J."/>
            <person name="Wong G.K.-S."/>
            <person name="Yang H."/>
        </authorList>
    </citation>
    <scope>NUCLEOTIDE SEQUENCE [LARGE SCALE GENOMIC DNA]</scope>
    <source>
        <strain>cv. Nipponbare</strain>
    </source>
</reference>
<reference key="5">
    <citation type="journal article" date="2005" name="Plant Physiol.">
        <title>Functional redundancy of AtFtsH metalloproteases in thylakoid membrane complexes.</title>
        <authorList>
            <person name="Yu F."/>
            <person name="Park S."/>
            <person name="Rodermel S.R."/>
        </authorList>
    </citation>
    <scope>GENE FAMILY</scope>
    <scope>NOMENCLATURE</scope>
</reference>
<evidence type="ECO:0000250" key="1"/>
<evidence type="ECO:0000255" key="2"/>
<evidence type="ECO:0000256" key="3">
    <source>
        <dbReference type="SAM" id="MobiDB-lite"/>
    </source>
</evidence>
<evidence type="ECO:0000305" key="4"/>
<organism>
    <name type="scientific">Oryza sativa subsp. japonica</name>
    <name type="common">Rice</name>
    <dbReference type="NCBI Taxonomy" id="39947"/>
    <lineage>
        <taxon>Eukaryota</taxon>
        <taxon>Viridiplantae</taxon>
        <taxon>Streptophyta</taxon>
        <taxon>Embryophyta</taxon>
        <taxon>Tracheophyta</taxon>
        <taxon>Spermatophyta</taxon>
        <taxon>Magnoliopsida</taxon>
        <taxon>Liliopsida</taxon>
        <taxon>Poales</taxon>
        <taxon>Poaceae</taxon>
        <taxon>BOP clade</taxon>
        <taxon>Oryzoideae</taxon>
        <taxon>Oryzeae</taxon>
        <taxon>Oryzinae</taxon>
        <taxon>Oryza</taxon>
        <taxon>Oryza sativa</taxon>
    </lineage>
</organism>
<dbReference type="EC" id="3.4.24.-"/>
<dbReference type="EMBL" id="AP004868">
    <property type="protein sequence ID" value="BAD25580.1"/>
    <property type="molecule type" value="Genomic_DNA"/>
</dbReference>
<dbReference type="EMBL" id="AP004868">
    <property type="protein sequence ID" value="BAD25581.1"/>
    <property type="status" value="ALT_SEQ"/>
    <property type="molecule type" value="Genomic_DNA"/>
</dbReference>
<dbReference type="EMBL" id="AP008208">
    <property type="protein sequence ID" value="BAF09498.1"/>
    <property type="molecule type" value="Genomic_DNA"/>
</dbReference>
<dbReference type="EMBL" id="AP014958">
    <property type="protein sequence ID" value="BAS80044.1"/>
    <property type="molecule type" value="Genomic_DNA"/>
</dbReference>
<dbReference type="EMBL" id="CM000139">
    <property type="status" value="NOT_ANNOTATED_CDS"/>
    <property type="molecule type" value="Genomic_DNA"/>
</dbReference>
<dbReference type="RefSeq" id="XP_015625409.1">
    <property type="nucleotide sequence ID" value="XM_015769923.1"/>
</dbReference>
<dbReference type="SMR" id="Q6H6R9"/>
<dbReference type="FunCoup" id="Q6H6R9">
    <property type="interactions" value="1061"/>
</dbReference>
<dbReference type="STRING" id="39947.Q6H6R9"/>
<dbReference type="MEROPS" id="M41.A04"/>
<dbReference type="PaxDb" id="39947-Q6H6R9"/>
<dbReference type="EnsemblPlants" id="Os02t0649700-01">
    <property type="protein sequence ID" value="Os02t0649700-01"/>
    <property type="gene ID" value="Os02g0649700"/>
</dbReference>
<dbReference type="Gramene" id="Os02t0649700-01">
    <property type="protein sequence ID" value="Os02t0649700-01"/>
    <property type="gene ID" value="Os02g0649700"/>
</dbReference>
<dbReference type="KEGG" id="dosa:Os02g0649700"/>
<dbReference type="eggNOG" id="KOG0731">
    <property type="taxonomic scope" value="Eukaryota"/>
</dbReference>
<dbReference type="HOGENOM" id="CLU_000688_23_3_1"/>
<dbReference type="InParanoid" id="Q6H6R9"/>
<dbReference type="OMA" id="EYLRPTI"/>
<dbReference type="OrthoDB" id="1413014at2759"/>
<dbReference type="Proteomes" id="UP000000763">
    <property type="component" value="Chromosome 2"/>
</dbReference>
<dbReference type="Proteomes" id="UP000007752">
    <property type="component" value="Chromosome 2"/>
</dbReference>
<dbReference type="Proteomes" id="UP000059680">
    <property type="component" value="Chromosome 2"/>
</dbReference>
<dbReference type="ExpressionAtlas" id="Q6H6R9">
    <property type="expression patterns" value="baseline and differential"/>
</dbReference>
<dbReference type="GO" id="GO:0009535">
    <property type="term" value="C:chloroplast thylakoid membrane"/>
    <property type="evidence" value="ECO:0000318"/>
    <property type="project" value="GO_Central"/>
</dbReference>
<dbReference type="GO" id="GO:0005524">
    <property type="term" value="F:ATP binding"/>
    <property type="evidence" value="ECO:0007669"/>
    <property type="project" value="UniProtKB-KW"/>
</dbReference>
<dbReference type="GO" id="GO:0016887">
    <property type="term" value="F:ATP hydrolysis activity"/>
    <property type="evidence" value="ECO:0007669"/>
    <property type="project" value="InterPro"/>
</dbReference>
<dbReference type="GO" id="GO:0004176">
    <property type="term" value="F:ATP-dependent peptidase activity"/>
    <property type="evidence" value="ECO:0000318"/>
    <property type="project" value="GO_Central"/>
</dbReference>
<dbReference type="GO" id="GO:0004222">
    <property type="term" value="F:metalloendopeptidase activity"/>
    <property type="evidence" value="ECO:0007669"/>
    <property type="project" value="InterPro"/>
</dbReference>
<dbReference type="GO" id="GO:0008270">
    <property type="term" value="F:zinc ion binding"/>
    <property type="evidence" value="ECO:0007669"/>
    <property type="project" value="InterPro"/>
</dbReference>
<dbReference type="GO" id="GO:0006508">
    <property type="term" value="P:proteolysis"/>
    <property type="evidence" value="ECO:0000318"/>
    <property type="project" value="GO_Central"/>
</dbReference>
<dbReference type="CDD" id="cd19501">
    <property type="entry name" value="RecA-like_FtsH"/>
    <property type="match status" value="1"/>
</dbReference>
<dbReference type="FunFam" id="1.10.8.60:FF:000001">
    <property type="entry name" value="ATP-dependent zinc metalloprotease FtsH"/>
    <property type="match status" value="1"/>
</dbReference>
<dbReference type="FunFam" id="1.20.58.760:FF:000006">
    <property type="entry name" value="ATP-dependent zinc metalloprotease FTSH 7, chloroplastic"/>
    <property type="match status" value="1"/>
</dbReference>
<dbReference type="FunFam" id="3.40.50.300:FF:000352">
    <property type="entry name" value="ATP-dependent zinc metalloprotease FTSH 7, chloroplastic"/>
    <property type="match status" value="1"/>
</dbReference>
<dbReference type="Gene3D" id="1.10.8.60">
    <property type="match status" value="1"/>
</dbReference>
<dbReference type="Gene3D" id="3.30.720.210">
    <property type="match status" value="1"/>
</dbReference>
<dbReference type="Gene3D" id="3.40.50.300">
    <property type="entry name" value="P-loop containing nucleotide triphosphate hydrolases"/>
    <property type="match status" value="1"/>
</dbReference>
<dbReference type="Gene3D" id="1.20.58.760">
    <property type="entry name" value="Peptidase M41"/>
    <property type="match status" value="1"/>
</dbReference>
<dbReference type="HAMAP" id="MF_01458">
    <property type="entry name" value="FtsH"/>
    <property type="match status" value="1"/>
</dbReference>
<dbReference type="InterPro" id="IPR003593">
    <property type="entry name" value="AAA+_ATPase"/>
</dbReference>
<dbReference type="InterPro" id="IPR041569">
    <property type="entry name" value="AAA_lid_3"/>
</dbReference>
<dbReference type="InterPro" id="IPR003959">
    <property type="entry name" value="ATPase_AAA_core"/>
</dbReference>
<dbReference type="InterPro" id="IPR003960">
    <property type="entry name" value="ATPase_AAA_CS"/>
</dbReference>
<dbReference type="InterPro" id="IPR005936">
    <property type="entry name" value="FtsH"/>
</dbReference>
<dbReference type="InterPro" id="IPR027417">
    <property type="entry name" value="P-loop_NTPase"/>
</dbReference>
<dbReference type="InterPro" id="IPR011546">
    <property type="entry name" value="Pept_M41_FtsH_extracell"/>
</dbReference>
<dbReference type="InterPro" id="IPR000642">
    <property type="entry name" value="Peptidase_M41"/>
</dbReference>
<dbReference type="InterPro" id="IPR037219">
    <property type="entry name" value="Peptidase_M41-like"/>
</dbReference>
<dbReference type="NCBIfam" id="TIGR01241">
    <property type="entry name" value="FtsH_fam"/>
    <property type="match status" value="1"/>
</dbReference>
<dbReference type="PANTHER" id="PTHR23076:SF49">
    <property type="entry name" value="ATP-DEPENDENT ZINC METALLOPROTEASE FTSH 7, CHLOROPLASTIC"/>
    <property type="match status" value="1"/>
</dbReference>
<dbReference type="PANTHER" id="PTHR23076">
    <property type="entry name" value="METALLOPROTEASE M41 FTSH"/>
    <property type="match status" value="1"/>
</dbReference>
<dbReference type="Pfam" id="PF00004">
    <property type="entry name" value="AAA"/>
    <property type="match status" value="1"/>
</dbReference>
<dbReference type="Pfam" id="PF17862">
    <property type="entry name" value="AAA_lid_3"/>
    <property type="match status" value="1"/>
</dbReference>
<dbReference type="Pfam" id="PF06480">
    <property type="entry name" value="FtsH_ext"/>
    <property type="match status" value="1"/>
</dbReference>
<dbReference type="Pfam" id="PF01434">
    <property type="entry name" value="Peptidase_M41"/>
    <property type="match status" value="1"/>
</dbReference>
<dbReference type="SMART" id="SM00382">
    <property type="entry name" value="AAA"/>
    <property type="match status" value="1"/>
</dbReference>
<dbReference type="SUPFAM" id="SSF140990">
    <property type="entry name" value="FtsH protease domain-like"/>
    <property type="match status" value="1"/>
</dbReference>
<dbReference type="SUPFAM" id="SSF52540">
    <property type="entry name" value="P-loop containing nucleoside triphosphate hydrolases"/>
    <property type="match status" value="1"/>
</dbReference>
<dbReference type="PROSITE" id="PS00674">
    <property type="entry name" value="AAA"/>
    <property type="match status" value="1"/>
</dbReference>
<gene>
    <name type="primary">FTSH7</name>
    <name type="ordered locus">Os02g0649700</name>
    <name type="ordered locus">LOC_Os02g43350</name>
    <name type="ORF">OsJ_007487</name>
    <name type="ORF">P0048B08.24-1</name>
    <name type="ORF">P0048B08.24-2</name>
</gene>
<proteinExistence type="inferred from homology"/>
<sequence>MASASAAAETLAAASLPVASPSRSLLRPLPRRASAGGGCSASVRISAVPPRGLGFAVVQRRVLRRPPAARANVEREGDGAEASGPGEASSSSSGDGDRDGAAAAAEAGGDGASTSTTSAAATPPQPPSSKRGENKWRRKLIKGGGVGRWLWEPIVQGREMGFLLLQLGFAIFALRMLRPEIALPGSEPRPQTTYVSVPYSDFLASIDKNQVKKVEVDGVHIMFRLRPEVEARAMEQPQVQRGTDSVADNAGVPRRIVFTTTRPVDIKTPYEKMVENSVEFGSPDKRSGGLLNSALVALIYVVLIAVVLQRLPISFSQHSAGQLRNRKNSNSGGAKVSESTDIVTFADVAGVDEAKEELEEIVEFLRNPERYIRLGARPPRGVLLVGLPGTGKTLLAKAVAGEAEVPFISCSASEFVELYVGMGAARVRDLFARAKKESPSIIFIDEIDAVAKSRDGRYRIVSNDEREQTLNQLLTEMDGFDTNSAVIVLGATNRADVLDPALRRPGRFDRVVMVEAPDRFGRESILKVHVSRKELPLGKDVDLSDIAAMTTGFTGADLANLVNEAALLAGRSNKEIVEKIDFICAVERSIAGIEKKHAKLKGNEKAVVARHEVGHAVVGTAVANLLPGQPRVEKLSILPRSGGALGFTYTPPTTEDRYLLFVDELRGRLVTLLGGRAAEEVVLSGRVSTGALDDIRRATDMAYKAVAEYGLNQRIGPISVATLSNGGLDESGGSPWGRDQGHLVDLVQREVKALLQSALDVALSVVRANPTVLEGLGAYLEENEKVEGEELQEWLKSVVAPKELTSFIRGKQEQVLQLEAGS</sequence>
<protein>
    <recommendedName>
        <fullName>ATP-dependent zinc metalloprotease FTSH 7, chloroplastic</fullName>
        <shortName>OsFTSH7</shortName>
        <ecNumber>3.4.24.-</ecNumber>
    </recommendedName>
</protein>
<comment type="function">
    <text evidence="1">Probable ATP-dependent zinc metallopeptidase.</text>
</comment>
<comment type="cofactor">
    <cofactor evidence="1">
        <name>Zn(2+)</name>
        <dbReference type="ChEBI" id="CHEBI:29105"/>
    </cofactor>
    <text evidence="1">Binds 1 zinc ion per subunit.</text>
</comment>
<comment type="subcellular location">
    <subcellularLocation>
        <location evidence="1">Plastid</location>
        <location evidence="1">Chloroplast thylakoid membrane</location>
        <topology evidence="1">Multi-pass membrane protein</topology>
        <orientation evidence="1">Stromal side</orientation>
    </subcellularLocation>
</comment>
<comment type="similarity">
    <text evidence="4">In the N-terminal section; belongs to the AAA ATPase family.</text>
</comment>
<comment type="similarity">
    <text evidence="4">In the C-terminal section; belongs to the peptidase M41 family.</text>
</comment>
<comment type="sequence caution" evidence="4">
    <conflict type="erroneous gene model prediction">
        <sequence resource="EMBL-CDS" id="BAD25581"/>
    </conflict>
</comment>
<keyword id="KW-0067">ATP-binding</keyword>
<keyword id="KW-0150">Chloroplast</keyword>
<keyword id="KW-0378">Hydrolase</keyword>
<keyword id="KW-0472">Membrane</keyword>
<keyword id="KW-0479">Metal-binding</keyword>
<keyword id="KW-0482">Metalloprotease</keyword>
<keyword id="KW-0547">Nucleotide-binding</keyword>
<keyword id="KW-0934">Plastid</keyword>
<keyword id="KW-0645">Protease</keyword>
<keyword id="KW-1185">Reference proteome</keyword>
<keyword id="KW-0793">Thylakoid</keyword>
<keyword id="KW-0809">Transit peptide</keyword>
<keyword id="KW-0812">Transmembrane</keyword>
<keyword id="KW-1133">Transmembrane helix</keyword>
<keyword id="KW-0862">Zinc</keyword>
<feature type="transit peptide" description="Chloroplast" evidence="2">
    <location>
        <begin position="1"/>
        <end position="70"/>
    </location>
</feature>
<feature type="transit peptide" description="Thylakoid" evidence="2">
    <location>
        <begin position="71"/>
        <end status="unknown"/>
    </location>
</feature>
<feature type="chain" id="PRO_0000341343" description="ATP-dependent zinc metalloprotease FTSH 7, chloroplastic">
    <location>
        <begin status="unknown"/>
        <end position="822"/>
    </location>
</feature>
<feature type="transmembrane region" description="Helical" evidence="2">
    <location>
        <begin position="154"/>
        <end position="174"/>
    </location>
</feature>
<feature type="transmembrane region" description="Helical" evidence="2">
    <location>
        <begin position="288"/>
        <end position="308"/>
    </location>
</feature>
<feature type="region of interest" description="Disordered" evidence="3">
    <location>
        <begin position="1"/>
        <end position="44"/>
    </location>
</feature>
<feature type="region of interest" description="Disordered" evidence="3">
    <location>
        <begin position="67"/>
        <end position="136"/>
    </location>
</feature>
<feature type="compositionally biased region" description="Low complexity" evidence="3">
    <location>
        <begin position="1"/>
        <end position="34"/>
    </location>
</feature>
<feature type="compositionally biased region" description="Low complexity" evidence="3">
    <location>
        <begin position="80"/>
        <end position="94"/>
    </location>
</feature>
<feature type="compositionally biased region" description="Low complexity" evidence="3">
    <location>
        <begin position="101"/>
        <end position="122"/>
    </location>
</feature>
<feature type="active site" evidence="1">
    <location>
        <position position="612"/>
    </location>
</feature>
<feature type="binding site" evidence="2">
    <location>
        <begin position="386"/>
        <end position="393"/>
    </location>
    <ligand>
        <name>ATP</name>
        <dbReference type="ChEBI" id="CHEBI:30616"/>
    </ligand>
</feature>
<feature type="binding site" evidence="1">
    <location>
        <position position="611"/>
    </location>
    <ligand>
        <name>Zn(2+)</name>
        <dbReference type="ChEBI" id="CHEBI:29105"/>
        <note>catalytic</note>
    </ligand>
</feature>
<feature type="binding site" evidence="1">
    <location>
        <position position="615"/>
    </location>
    <ligand>
        <name>Zn(2+)</name>
        <dbReference type="ChEBI" id="CHEBI:29105"/>
        <note>catalytic</note>
    </ligand>
</feature>
<feature type="binding site" evidence="1">
    <location>
        <position position="694"/>
    </location>
    <ligand>
        <name>Zn(2+)</name>
        <dbReference type="ChEBI" id="CHEBI:29105"/>
        <note>catalytic</note>
    </ligand>
</feature>